<keyword id="KW-0227">DNA damage</keyword>
<keyword id="KW-0234">DNA repair</keyword>
<keyword id="KW-0378">Hydrolase</keyword>
<keyword id="KW-1185">Reference proteome</keyword>
<accession>O05678</accession>
<accession>Q9CC32</accession>
<evidence type="ECO:0000255" key="1">
    <source>
        <dbReference type="HAMAP-Rule" id="MF_00527"/>
    </source>
</evidence>
<evidence type="ECO:0000305" key="2"/>
<feature type="chain" id="PRO_0000100093" description="Putative 3-methyladenine DNA glycosylase">
    <location>
        <begin position="1"/>
        <end position="214"/>
    </location>
</feature>
<sequence>MRSPRRCKICAVSADQLVVDPVVAAHRLLGATITGRGVCAIVVEVEAYGGVPDGPWPDAAAHSYHGRNDRNAVMFGPPGRLYTYCSHGIHVCANVSCGPDGTAAAVLIRAGALENGADVARSRRGASVRTVALARGPGNLCSALGITMDDNGIDVFAADSPVTLVLNEAQEAMSGPRVGISHAADRPWRLWLPGRPEVSTYRRSPRAPAPGASD</sequence>
<organism>
    <name type="scientific">Mycobacterium leprae (strain TN)</name>
    <dbReference type="NCBI Taxonomy" id="272631"/>
    <lineage>
        <taxon>Bacteria</taxon>
        <taxon>Bacillati</taxon>
        <taxon>Actinomycetota</taxon>
        <taxon>Actinomycetes</taxon>
        <taxon>Mycobacteriales</taxon>
        <taxon>Mycobacteriaceae</taxon>
        <taxon>Mycobacterium</taxon>
    </lineage>
</organism>
<protein>
    <recommendedName>
        <fullName evidence="1">Putative 3-methyladenine DNA glycosylase</fullName>
        <ecNumber evidence="1">3.2.2.-</ecNumber>
    </recommendedName>
</protein>
<dbReference type="EC" id="3.2.2.-" evidence="1"/>
<dbReference type="EMBL" id="Z95117">
    <property type="protein sequence ID" value="CAB08290.1"/>
    <property type="status" value="ALT_INIT"/>
    <property type="molecule type" value="Genomic_DNA"/>
</dbReference>
<dbReference type="EMBL" id="AL583921">
    <property type="protein sequence ID" value="CAC31732.1"/>
    <property type="molecule type" value="Genomic_DNA"/>
</dbReference>
<dbReference type="PIR" id="A87078">
    <property type="entry name" value="A87078"/>
</dbReference>
<dbReference type="RefSeq" id="NP_301965.1">
    <property type="nucleotide sequence ID" value="NC_002677.1"/>
</dbReference>
<dbReference type="SMR" id="O05678"/>
<dbReference type="STRING" id="272631.gene:17575189"/>
<dbReference type="KEGG" id="mle:ML1351"/>
<dbReference type="PATRIC" id="fig|272631.5.peg.2501"/>
<dbReference type="Leproma" id="ML1351"/>
<dbReference type="eggNOG" id="COG2094">
    <property type="taxonomic scope" value="Bacteria"/>
</dbReference>
<dbReference type="HOGENOM" id="CLU_060471_3_1_11"/>
<dbReference type="OrthoDB" id="9794313at2"/>
<dbReference type="Proteomes" id="UP000000806">
    <property type="component" value="Chromosome"/>
</dbReference>
<dbReference type="GO" id="GO:0003905">
    <property type="term" value="F:alkylbase DNA N-glycosylase activity"/>
    <property type="evidence" value="ECO:0007669"/>
    <property type="project" value="InterPro"/>
</dbReference>
<dbReference type="GO" id="GO:0003677">
    <property type="term" value="F:DNA binding"/>
    <property type="evidence" value="ECO:0007669"/>
    <property type="project" value="InterPro"/>
</dbReference>
<dbReference type="GO" id="GO:0006284">
    <property type="term" value="P:base-excision repair"/>
    <property type="evidence" value="ECO:0007669"/>
    <property type="project" value="InterPro"/>
</dbReference>
<dbReference type="CDD" id="cd00540">
    <property type="entry name" value="AAG"/>
    <property type="match status" value="1"/>
</dbReference>
<dbReference type="Gene3D" id="3.10.300.10">
    <property type="entry name" value="Methylpurine-DNA glycosylase (MPG)"/>
    <property type="match status" value="1"/>
</dbReference>
<dbReference type="HAMAP" id="MF_00527">
    <property type="entry name" value="3MGH"/>
    <property type="match status" value="1"/>
</dbReference>
<dbReference type="InterPro" id="IPR011034">
    <property type="entry name" value="Formyl_transferase-like_C_sf"/>
</dbReference>
<dbReference type="InterPro" id="IPR003180">
    <property type="entry name" value="MPG"/>
</dbReference>
<dbReference type="InterPro" id="IPR036995">
    <property type="entry name" value="MPG_sf"/>
</dbReference>
<dbReference type="NCBIfam" id="TIGR00567">
    <property type="entry name" value="3mg"/>
    <property type="match status" value="1"/>
</dbReference>
<dbReference type="NCBIfam" id="NF002003">
    <property type="entry name" value="PRK00802.1-3"/>
    <property type="match status" value="1"/>
</dbReference>
<dbReference type="PANTHER" id="PTHR10429">
    <property type="entry name" value="DNA-3-METHYLADENINE GLYCOSYLASE"/>
    <property type="match status" value="1"/>
</dbReference>
<dbReference type="PANTHER" id="PTHR10429:SF0">
    <property type="entry name" value="DNA-3-METHYLADENINE GLYCOSYLASE"/>
    <property type="match status" value="1"/>
</dbReference>
<dbReference type="Pfam" id="PF02245">
    <property type="entry name" value="Pur_DNA_glyco"/>
    <property type="match status" value="1"/>
</dbReference>
<dbReference type="SUPFAM" id="SSF50486">
    <property type="entry name" value="FMT C-terminal domain-like"/>
    <property type="match status" value="1"/>
</dbReference>
<proteinExistence type="inferred from homology"/>
<comment type="similarity">
    <text evidence="1">Belongs to the DNA glycosylase MPG family.</text>
</comment>
<comment type="sequence caution" evidence="2">
    <conflict type="erroneous initiation">
        <sequence resource="EMBL-CDS" id="CAB08290"/>
    </conflict>
</comment>
<reference key="1">
    <citation type="journal article" date="2001" name="Nature">
        <title>Massive gene decay in the leprosy bacillus.</title>
        <authorList>
            <person name="Cole S.T."/>
            <person name="Eiglmeier K."/>
            <person name="Parkhill J."/>
            <person name="James K.D."/>
            <person name="Thomson N.R."/>
            <person name="Wheeler P.R."/>
            <person name="Honore N."/>
            <person name="Garnier T."/>
            <person name="Churcher C.M."/>
            <person name="Harris D.E."/>
            <person name="Mungall K.L."/>
            <person name="Basham D."/>
            <person name="Brown D."/>
            <person name="Chillingworth T."/>
            <person name="Connor R."/>
            <person name="Davies R.M."/>
            <person name="Devlin K."/>
            <person name="Duthoy S."/>
            <person name="Feltwell T."/>
            <person name="Fraser A."/>
            <person name="Hamlin N."/>
            <person name="Holroyd S."/>
            <person name="Hornsby T."/>
            <person name="Jagels K."/>
            <person name="Lacroix C."/>
            <person name="Maclean J."/>
            <person name="Moule S."/>
            <person name="Murphy L.D."/>
            <person name="Oliver K."/>
            <person name="Quail M.A."/>
            <person name="Rajandream M.A."/>
            <person name="Rutherford K.M."/>
            <person name="Rutter S."/>
            <person name="Seeger K."/>
            <person name="Simon S."/>
            <person name="Simmonds M."/>
            <person name="Skelton J."/>
            <person name="Squares R."/>
            <person name="Squares S."/>
            <person name="Stevens K."/>
            <person name="Taylor K."/>
            <person name="Whitehead S."/>
            <person name="Woodward J.R."/>
            <person name="Barrell B.G."/>
        </authorList>
    </citation>
    <scope>NUCLEOTIDE SEQUENCE [LARGE SCALE GENOMIC DNA]</scope>
    <source>
        <strain>TN</strain>
    </source>
</reference>
<gene>
    <name type="ordered locus">ML1351</name>
    <name type="ORF">MLC1351.17c</name>
</gene>
<name>3MGH_MYCLE</name>